<keyword id="KW-0067">ATP-binding</keyword>
<keyword id="KW-0963">Cytoplasm</keyword>
<keyword id="KW-0227">DNA damage</keyword>
<keyword id="KW-0234">DNA repair</keyword>
<keyword id="KW-0235">DNA replication</keyword>
<keyword id="KW-0238">DNA-binding</keyword>
<keyword id="KW-0547">Nucleotide-binding</keyword>
<keyword id="KW-0742">SOS response</keyword>
<evidence type="ECO:0000255" key="1">
    <source>
        <dbReference type="HAMAP-Rule" id="MF_00365"/>
    </source>
</evidence>
<gene>
    <name evidence="1" type="primary">recF</name>
    <name type="ordered locus">RL0148</name>
</gene>
<feature type="chain" id="PRO_1000048563" description="DNA replication and repair protein RecF">
    <location>
        <begin position="1"/>
        <end position="374"/>
    </location>
</feature>
<feature type="binding site" evidence="1">
    <location>
        <begin position="34"/>
        <end position="41"/>
    </location>
    <ligand>
        <name>ATP</name>
        <dbReference type="ChEBI" id="CHEBI:30616"/>
    </ligand>
</feature>
<organism>
    <name type="scientific">Rhizobium johnstonii (strain DSM 114642 / LMG 32736 / 3841)</name>
    <name type="common">Rhizobium leguminosarum bv. viciae</name>
    <dbReference type="NCBI Taxonomy" id="216596"/>
    <lineage>
        <taxon>Bacteria</taxon>
        <taxon>Pseudomonadati</taxon>
        <taxon>Pseudomonadota</taxon>
        <taxon>Alphaproteobacteria</taxon>
        <taxon>Hyphomicrobiales</taxon>
        <taxon>Rhizobiaceae</taxon>
        <taxon>Rhizobium/Agrobacterium group</taxon>
        <taxon>Rhizobium</taxon>
        <taxon>Rhizobium johnstonii</taxon>
    </lineage>
</organism>
<proteinExistence type="inferred from homology"/>
<protein>
    <recommendedName>
        <fullName evidence="1">DNA replication and repair protein RecF</fullName>
    </recommendedName>
</protein>
<dbReference type="EMBL" id="AM236080">
    <property type="protein sequence ID" value="CAK05637.1"/>
    <property type="molecule type" value="Genomic_DNA"/>
</dbReference>
<dbReference type="RefSeq" id="WP_011649966.1">
    <property type="nucleotide sequence ID" value="NC_008380.1"/>
</dbReference>
<dbReference type="SMR" id="Q1MN15"/>
<dbReference type="EnsemblBacteria" id="CAK05637">
    <property type="protein sequence ID" value="CAK05637"/>
    <property type="gene ID" value="RL0148"/>
</dbReference>
<dbReference type="KEGG" id="rle:RL0148"/>
<dbReference type="eggNOG" id="COG1195">
    <property type="taxonomic scope" value="Bacteria"/>
</dbReference>
<dbReference type="HOGENOM" id="CLU_040267_2_0_5"/>
<dbReference type="Proteomes" id="UP000006575">
    <property type="component" value="Chromosome"/>
</dbReference>
<dbReference type="GO" id="GO:0005737">
    <property type="term" value="C:cytoplasm"/>
    <property type="evidence" value="ECO:0007669"/>
    <property type="project" value="UniProtKB-SubCell"/>
</dbReference>
<dbReference type="GO" id="GO:0005524">
    <property type="term" value="F:ATP binding"/>
    <property type="evidence" value="ECO:0007669"/>
    <property type="project" value="UniProtKB-UniRule"/>
</dbReference>
<dbReference type="GO" id="GO:0016887">
    <property type="term" value="F:ATP hydrolysis activity"/>
    <property type="evidence" value="ECO:0007669"/>
    <property type="project" value="InterPro"/>
</dbReference>
<dbReference type="GO" id="GO:0003697">
    <property type="term" value="F:single-stranded DNA binding"/>
    <property type="evidence" value="ECO:0007669"/>
    <property type="project" value="UniProtKB-UniRule"/>
</dbReference>
<dbReference type="GO" id="GO:0006260">
    <property type="term" value="P:DNA replication"/>
    <property type="evidence" value="ECO:0007669"/>
    <property type="project" value="UniProtKB-UniRule"/>
</dbReference>
<dbReference type="GO" id="GO:0000731">
    <property type="term" value="P:DNA synthesis involved in DNA repair"/>
    <property type="evidence" value="ECO:0007669"/>
    <property type="project" value="TreeGrafter"/>
</dbReference>
<dbReference type="GO" id="GO:0006302">
    <property type="term" value="P:double-strand break repair"/>
    <property type="evidence" value="ECO:0007669"/>
    <property type="project" value="TreeGrafter"/>
</dbReference>
<dbReference type="GO" id="GO:0009432">
    <property type="term" value="P:SOS response"/>
    <property type="evidence" value="ECO:0007669"/>
    <property type="project" value="UniProtKB-UniRule"/>
</dbReference>
<dbReference type="CDD" id="cd03242">
    <property type="entry name" value="ABC_RecF"/>
    <property type="match status" value="1"/>
</dbReference>
<dbReference type="Gene3D" id="3.40.50.300">
    <property type="entry name" value="P-loop containing nucleotide triphosphate hydrolases"/>
    <property type="match status" value="1"/>
</dbReference>
<dbReference type="Gene3D" id="1.20.1050.90">
    <property type="entry name" value="RecF/RecN/SMC, N-terminal domain"/>
    <property type="match status" value="1"/>
</dbReference>
<dbReference type="HAMAP" id="MF_00365">
    <property type="entry name" value="RecF"/>
    <property type="match status" value="1"/>
</dbReference>
<dbReference type="InterPro" id="IPR003593">
    <property type="entry name" value="AAA+_ATPase"/>
</dbReference>
<dbReference type="InterPro" id="IPR001238">
    <property type="entry name" value="DNA-binding_RecF"/>
</dbReference>
<dbReference type="InterPro" id="IPR018078">
    <property type="entry name" value="DNA-binding_RecF_CS"/>
</dbReference>
<dbReference type="InterPro" id="IPR027417">
    <property type="entry name" value="P-loop_NTPase"/>
</dbReference>
<dbReference type="InterPro" id="IPR003395">
    <property type="entry name" value="RecF/RecN/SMC_N"/>
</dbReference>
<dbReference type="InterPro" id="IPR042174">
    <property type="entry name" value="RecF_2"/>
</dbReference>
<dbReference type="NCBIfam" id="TIGR00611">
    <property type="entry name" value="recf"/>
    <property type="match status" value="1"/>
</dbReference>
<dbReference type="PANTHER" id="PTHR32182">
    <property type="entry name" value="DNA REPLICATION AND REPAIR PROTEIN RECF"/>
    <property type="match status" value="1"/>
</dbReference>
<dbReference type="PANTHER" id="PTHR32182:SF0">
    <property type="entry name" value="DNA REPLICATION AND REPAIR PROTEIN RECF"/>
    <property type="match status" value="1"/>
</dbReference>
<dbReference type="Pfam" id="PF02463">
    <property type="entry name" value="SMC_N"/>
    <property type="match status" value="1"/>
</dbReference>
<dbReference type="SMART" id="SM00382">
    <property type="entry name" value="AAA"/>
    <property type="match status" value="1"/>
</dbReference>
<dbReference type="SUPFAM" id="SSF52540">
    <property type="entry name" value="P-loop containing nucleoside triphosphate hydrolases"/>
    <property type="match status" value="1"/>
</dbReference>
<dbReference type="PROSITE" id="PS00617">
    <property type="entry name" value="RECF_1"/>
    <property type="match status" value="1"/>
</dbReference>
<dbReference type="PROSITE" id="PS00618">
    <property type="entry name" value="RECF_2"/>
    <property type="match status" value="1"/>
</dbReference>
<name>RECF_RHIJ3</name>
<reference key="1">
    <citation type="journal article" date="2006" name="Genome Biol.">
        <title>The genome of Rhizobium leguminosarum has recognizable core and accessory components.</title>
        <authorList>
            <person name="Young J.P.W."/>
            <person name="Crossman L.C."/>
            <person name="Johnston A.W.B."/>
            <person name="Thomson N.R."/>
            <person name="Ghazoui Z.F."/>
            <person name="Hull K.H."/>
            <person name="Wexler M."/>
            <person name="Curson A.R.J."/>
            <person name="Todd J.D."/>
            <person name="Poole P.S."/>
            <person name="Mauchline T.H."/>
            <person name="East A.K."/>
            <person name="Quail M.A."/>
            <person name="Churcher C."/>
            <person name="Arrowsmith C."/>
            <person name="Cherevach I."/>
            <person name="Chillingworth T."/>
            <person name="Clarke K."/>
            <person name="Cronin A."/>
            <person name="Davis P."/>
            <person name="Fraser A."/>
            <person name="Hance Z."/>
            <person name="Hauser H."/>
            <person name="Jagels K."/>
            <person name="Moule S."/>
            <person name="Mungall K."/>
            <person name="Norbertczak H."/>
            <person name="Rabbinowitsch E."/>
            <person name="Sanders M."/>
            <person name="Simmonds M."/>
            <person name="Whitehead S."/>
            <person name="Parkhill J."/>
        </authorList>
    </citation>
    <scope>NUCLEOTIDE SEQUENCE [LARGE SCALE GENOMIC DNA]</scope>
    <source>
        <strain>DSM 114642 / LMG 32736 / 3841</strain>
    </source>
</reference>
<accession>Q1MN15</accession>
<sequence length="374" mass="40481">MPHKVSLSRLKLTDFRNYAAAALALDGRHAVLTGDNGAGKTNLMEAVSLLSPGRGLRRAAYGDITRVGAAGGFSIFAALDGMEGDVEIGTGIETGEETTARKLRINGTTAKTADELTDHLRLLWLTPAMDGLFTGASSDRRRFLDRLVLSLDPAHGRRASDFERAMRSRNKLLDEGRFDPSWLAGIEEQMASLGIAMALARQEMLGLLTRLIEETRETSPFPSASLQLSGFMDGQFSRPSVDLEDDYAAMLAESRYRDAGAGRTLEGPHRADLIVHHREKAMEAERCSTGEQKALLVGLVLAHARLVGNLTGHAPILLLDEIAAHLDEGRRAALFDLIDGLGGQAFMTGTDRAMFSALGDKAQFFTVADGRVFE</sequence>
<comment type="function">
    <text evidence="1">The RecF protein is involved in DNA metabolism; it is required for DNA replication and normal SOS inducibility. RecF binds preferentially to single-stranded, linear DNA. It also seems to bind ATP.</text>
</comment>
<comment type="subcellular location">
    <subcellularLocation>
        <location evidence="1">Cytoplasm</location>
    </subcellularLocation>
</comment>
<comment type="similarity">
    <text evidence="1">Belongs to the RecF family.</text>
</comment>